<keyword id="KW-0028">Amino-acid biosynthesis</keyword>
<keyword id="KW-0057">Aromatic amino acid biosynthesis</keyword>
<keyword id="KW-0521">NADP</keyword>
<keyword id="KW-0560">Oxidoreductase</keyword>
<protein>
    <recommendedName>
        <fullName evidence="1">Shikimate dehydrogenase (NADP(+))</fullName>
        <shortName evidence="1">SDH</shortName>
        <ecNumber evidence="1">1.1.1.25</ecNumber>
    </recommendedName>
</protein>
<reference key="1">
    <citation type="journal article" date="2006" name="Proc. Natl. Acad. Sci. U.S.A.">
        <title>Molecular genetic anatomy of inter- and intraserotype variation in the human bacterial pathogen group A Streptococcus.</title>
        <authorList>
            <person name="Beres S.B."/>
            <person name="Richter E.W."/>
            <person name="Nagiec M.J."/>
            <person name="Sumby P."/>
            <person name="Porcella S.F."/>
            <person name="DeLeo F.R."/>
            <person name="Musser J.M."/>
        </authorList>
    </citation>
    <scope>NUCLEOTIDE SEQUENCE [LARGE SCALE GENOMIC DNA]</scope>
    <source>
        <strain>MGAS9429</strain>
    </source>
</reference>
<dbReference type="EC" id="1.1.1.25" evidence="1"/>
<dbReference type="EMBL" id="CP000259">
    <property type="protein sequence ID" value="ABF32484.1"/>
    <property type="molecule type" value="Genomic_DNA"/>
</dbReference>
<dbReference type="RefSeq" id="WP_002983735.1">
    <property type="nucleotide sequence ID" value="NC_008021.1"/>
</dbReference>
<dbReference type="SMR" id="Q1JKT5"/>
<dbReference type="KEGG" id="spk:MGAS9429_Spy1297"/>
<dbReference type="HOGENOM" id="CLU_044063_4_4_9"/>
<dbReference type="UniPathway" id="UPA00053">
    <property type="reaction ID" value="UER00087"/>
</dbReference>
<dbReference type="Proteomes" id="UP000002433">
    <property type="component" value="Chromosome"/>
</dbReference>
<dbReference type="GO" id="GO:0050661">
    <property type="term" value="F:NADP binding"/>
    <property type="evidence" value="ECO:0007669"/>
    <property type="project" value="InterPro"/>
</dbReference>
<dbReference type="GO" id="GO:0004764">
    <property type="term" value="F:shikimate 3-dehydrogenase (NADP+) activity"/>
    <property type="evidence" value="ECO:0007669"/>
    <property type="project" value="UniProtKB-UniRule"/>
</dbReference>
<dbReference type="GO" id="GO:0008652">
    <property type="term" value="P:amino acid biosynthetic process"/>
    <property type="evidence" value="ECO:0007669"/>
    <property type="project" value="UniProtKB-KW"/>
</dbReference>
<dbReference type="GO" id="GO:0009073">
    <property type="term" value="P:aromatic amino acid family biosynthetic process"/>
    <property type="evidence" value="ECO:0007669"/>
    <property type="project" value="UniProtKB-KW"/>
</dbReference>
<dbReference type="GO" id="GO:0009423">
    <property type="term" value="P:chorismate biosynthetic process"/>
    <property type="evidence" value="ECO:0007669"/>
    <property type="project" value="UniProtKB-UniRule"/>
</dbReference>
<dbReference type="GO" id="GO:0019632">
    <property type="term" value="P:shikimate metabolic process"/>
    <property type="evidence" value="ECO:0007669"/>
    <property type="project" value="InterPro"/>
</dbReference>
<dbReference type="CDD" id="cd01065">
    <property type="entry name" value="NAD_bind_Shikimate_DH"/>
    <property type="match status" value="1"/>
</dbReference>
<dbReference type="FunFam" id="3.40.50.10860:FF:000004">
    <property type="entry name" value="Quinate/shikimate dehydrogenase"/>
    <property type="match status" value="1"/>
</dbReference>
<dbReference type="FunFam" id="3.40.50.720:FF:000086">
    <property type="entry name" value="Quinate/shikimate dehydrogenase"/>
    <property type="match status" value="1"/>
</dbReference>
<dbReference type="Gene3D" id="3.40.50.10860">
    <property type="entry name" value="Leucine Dehydrogenase, chain A, domain 1"/>
    <property type="match status" value="1"/>
</dbReference>
<dbReference type="Gene3D" id="3.40.50.720">
    <property type="entry name" value="NAD(P)-binding Rossmann-like Domain"/>
    <property type="match status" value="1"/>
</dbReference>
<dbReference type="HAMAP" id="MF_00222">
    <property type="entry name" value="Shikimate_DH_AroE"/>
    <property type="match status" value="1"/>
</dbReference>
<dbReference type="InterPro" id="IPR046346">
    <property type="entry name" value="Aminoacid_DH-like_N_sf"/>
</dbReference>
<dbReference type="InterPro" id="IPR036291">
    <property type="entry name" value="NAD(P)-bd_dom_sf"/>
</dbReference>
<dbReference type="InterPro" id="IPR041121">
    <property type="entry name" value="SDH_C"/>
</dbReference>
<dbReference type="InterPro" id="IPR011342">
    <property type="entry name" value="Shikimate_DH"/>
</dbReference>
<dbReference type="InterPro" id="IPR013708">
    <property type="entry name" value="Shikimate_DH-bd_N"/>
</dbReference>
<dbReference type="InterPro" id="IPR022893">
    <property type="entry name" value="Shikimate_DH_fam"/>
</dbReference>
<dbReference type="NCBIfam" id="TIGR00507">
    <property type="entry name" value="aroE"/>
    <property type="match status" value="1"/>
</dbReference>
<dbReference type="NCBIfam" id="NF001319">
    <property type="entry name" value="PRK00258.3-3"/>
    <property type="match status" value="1"/>
</dbReference>
<dbReference type="PANTHER" id="PTHR21089:SF1">
    <property type="entry name" value="BIFUNCTIONAL 3-DEHYDROQUINATE DEHYDRATASE_SHIKIMATE DEHYDROGENASE, CHLOROPLASTIC"/>
    <property type="match status" value="1"/>
</dbReference>
<dbReference type="PANTHER" id="PTHR21089">
    <property type="entry name" value="SHIKIMATE DEHYDROGENASE"/>
    <property type="match status" value="1"/>
</dbReference>
<dbReference type="Pfam" id="PF18317">
    <property type="entry name" value="SDH_C"/>
    <property type="match status" value="1"/>
</dbReference>
<dbReference type="Pfam" id="PF08501">
    <property type="entry name" value="Shikimate_dh_N"/>
    <property type="match status" value="1"/>
</dbReference>
<dbReference type="SUPFAM" id="SSF53223">
    <property type="entry name" value="Aminoacid dehydrogenase-like, N-terminal domain"/>
    <property type="match status" value="1"/>
</dbReference>
<dbReference type="SUPFAM" id="SSF51735">
    <property type="entry name" value="NAD(P)-binding Rossmann-fold domains"/>
    <property type="match status" value="1"/>
</dbReference>
<proteinExistence type="inferred from homology"/>
<name>AROE_STRPC</name>
<evidence type="ECO:0000255" key="1">
    <source>
        <dbReference type="HAMAP-Rule" id="MF_00222"/>
    </source>
</evidence>
<comment type="function">
    <text evidence="1">Involved in the biosynthesis of the chorismate, which leads to the biosynthesis of aromatic amino acids. Catalyzes the reversible NADPH linked reduction of 3-dehydroshikimate (DHSA) to yield shikimate (SA).</text>
</comment>
<comment type="catalytic activity">
    <reaction evidence="1">
        <text>shikimate + NADP(+) = 3-dehydroshikimate + NADPH + H(+)</text>
        <dbReference type="Rhea" id="RHEA:17737"/>
        <dbReference type="ChEBI" id="CHEBI:15378"/>
        <dbReference type="ChEBI" id="CHEBI:16630"/>
        <dbReference type="ChEBI" id="CHEBI:36208"/>
        <dbReference type="ChEBI" id="CHEBI:57783"/>
        <dbReference type="ChEBI" id="CHEBI:58349"/>
        <dbReference type="EC" id="1.1.1.25"/>
    </reaction>
</comment>
<comment type="pathway">
    <text evidence="1">Metabolic intermediate biosynthesis; chorismate biosynthesis; chorismate from D-erythrose 4-phosphate and phosphoenolpyruvate: step 4/7.</text>
</comment>
<comment type="subunit">
    <text evidence="1">Homodimer.</text>
</comment>
<comment type="similarity">
    <text evidence="1">Belongs to the shikimate dehydrogenase family.</text>
</comment>
<accession>Q1JKT5</accession>
<feature type="chain" id="PRO_1000021347" description="Shikimate dehydrogenase (NADP(+))">
    <location>
        <begin position="1"/>
        <end position="292"/>
    </location>
</feature>
<feature type="active site" description="Proton acceptor" evidence="1">
    <location>
        <position position="73"/>
    </location>
</feature>
<feature type="binding site" evidence="1">
    <location>
        <begin position="22"/>
        <end position="24"/>
    </location>
    <ligand>
        <name>shikimate</name>
        <dbReference type="ChEBI" id="CHEBI:36208"/>
    </ligand>
</feature>
<feature type="binding site" evidence="1">
    <location>
        <position position="69"/>
    </location>
    <ligand>
        <name>shikimate</name>
        <dbReference type="ChEBI" id="CHEBI:36208"/>
    </ligand>
</feature>
<feature type="binding site" evidence="1">
    <location>
        <position position="94"/>
    </location>
    <ligand>
        <name>shikimate</name>
        <dbReference type="ChEBI" id="CHEBI:36208"/>
    </ligand>
</feature>
<feature type="binding site" evidence="1">
    <location>
        <position position="111"/>
    </location>
    <ligand>
        <name>shikimate</name>
        <dbReference type="ChEBI" id="CHEBI:36208"/>
    </ligand>
</feature>
<feature type="binding site" evidence="1">
    <location>
        <begin position="135"/>
        <end position="139"/>
    </location>
    <ligand>
        <name>NADP(+)</name>
        <dbReference type="ChEBI" id="CHEBI:58349"/>
    </ligand>
</feature>
<feature type="binding site" evidence="1">
    <location>
        <position position="236"/>
    </location>
    <ligand>
        <name>NADP(+)</name>
        <dbReference type="ChEBI" id="CHEBI:58349"/>
    </ligand>
</feature>
<feature type="binding site" evidence="1">
    <location>
        <position position="238"/>
    </location>
    <ligand>
        <name>shikimate</name>
        <dbReference type="ChEBI" id="CHEBI:36208"/>
    </ligand>
</feature>
<feature type="binding site" evidence="1">
    <location>
        <position position="260"/>
    </location>
    <ligand>
        <name>NADP(+)</name>
        <dbReference type="ChEBI" id="CHEBI:58349"/>
    </ligand>
</feature>
<sequence>MSERLSGHTLLVSLLATPIRHSLSPKMHNEAYAKLGLDYAYLAFEVGTEQLADAVQGIRALGIRGSNVSMPNKEAILPLLDDLSPAAELVGAVNTVVNKDGKGHLVGHITDGIGALRALADEGVSVKNKIITLAGVGGAGKAIAVQLAFDGAKEVRLFNRQATRLSSVQKLVTKLNQLTRTKVTLQDLEDQTAFKEAIRESHLFIDATSVGMKPLENLSLITDPELIRPDLVVFDIVYSPAETKLLAFARQHGAQKVINGLGMVLYQGAEAFKLITGQDMPVDAIKPLLGDE</sequence>
<gene>
    <name evidence="1" type="primary">aroE</name>
    <name type="ordered locus">MGAS9429_Spy1297</name>
</gene>
<organism>
    <name type="scientific">Streptococcus pyogenes serotype M12 (strain MGAS9429)</name>
    <dbReference type="NCBI Taxonomy" id="370551"/>
    <lineage>
        <taxon>Bacteria</taxon>
        <taxon>Bacillati</taxon>
        <taxon>Bacillota</taxon>
        <taxon>Bacilli</taxon>
        <taxon>Lactobacillales</taxon>
        <taxon>Streptococcaceae</taxon>
        <taxon>Streptococcus</taxon>
    </lineage>
</organism>